<keyword id="KW-0249">Electron transport</keyword>
<keyword id="KW-0472">Membrane</keyword>
<keyword id="KW-0496">Mitochondrion</keyword>
<keyword id="KW-0999">Mitochondrion inner membrane</keyword>
<keyword id="KW-0520">NAD</keyword>
<keyword id="KW-1185">Reference proteome</keyword>
<keyword id="KW-0679">Respiratory chain</keyword>
<keyword id="KW-1278">Translocase</keyword>
<keyword id="KW-0812">Transmembrane</keyword>
<keyword id="KW-1133">Transmembrane helix</keyword>
<keyword id="KW-0813">Transport</keyword>
<keyword id="KW-0830">Ubiquinone</keyword>
<gene>
    <name evidence="1" type="primary">MT-ND3</name>
    <name type="synonym">MTND3</name>
    <name type="synonym">NADH3</name>
    <name type="synonym">ND3</name>
</gene>
<sequence>MNLMITLLTNTMLTSLMVLIAFWLPQTYNYSEKTSPYECGFDPVGSARLPFSMKFFLVAITFLLFDLEIALLLPLPWAIQANNTSLTLLMSFMLIILLAIGLAYEWLQKGLEWTK</sequence>
<comment type="function">
    <text evidence="1">Core subunit of the mitochondrial membrane respiratory chain NADH dehydrogenase (Complex I) which catalyzes electron transfer from NADH through the respiratory chain, using ubiquinone as an electron acceptor. Essential for the catalytic activity of complex I.</text>
</comment>
<comment type="catalytic activity">
    <reaction evidence="1">
        <text>a ubiquinone + NADH + 5 H(+)(in) = a ubiquinol + NAD(+) + 4 H(+)(out)</text>
        <dbReference type="Rhea" id="RHEA:29091"/>
        <dbReference type="Rhea" id="RHEA-COMP:9565"/>
        <dbReference type="Rhea" id="RHEA-COMP:9566"/>
        <dbReference type="ChEBI" id="CHEBI:15378"/>
        <dbReference type="ChEBI" id="CHEBI:16389"/>
        <dbReference type="ChEBI" id="CHEBI:17976"/>
        <dbReference type="ChEBI" id="CHEBI:57540"/>
        <dbReference type="ChEBI" id="CHEBI:57945"/>
        <dbReference type="EC" id="7.1.1.2"/>
    </reaction>
</comment>
<comment type="subunit">
    <text evidence="1">Core subunit of respiratory chain NADH dehydrogenase (Complex I) which is composed of 45 different subunits. Interacts with TMEM186. Interacts with TMEM242 (By similarity).</text>
</comment>
<comment type="subcellular location">
    <subcellularLocation>
        <location evidence="2">Mitochondrion inner membrane</location>
        <topology evidence="3">Multi-pass membrane protein</topology>
    </subcellularLocation>
</comment>
<comment type="similarity">
    <text evidence="4">Belongs to the complex I subunit 3 family.</text>
</comment>
<feature type="chain" id="PRO_0000232862" description="NADH-ubiquinone oxidoreductase chain 3">
    <location>
        <begin position="1"/>
        <end position="115"/>
    </location>
</feature>
<feature type="transmembrane region" description="Helical" evidence="3">
    <location>
        <begin position="3"/>
        <end position="23"/>
    </location>
</feature>
<feature type="transmembrane region" description="Helical" evidence="3">
    <location>
        <begin position="55"/>
        <end position="75"/>
    </location>
</feature>
<feature type="transmembrane region" description="Helical" evidence="3">
    <location>
        <begin position="86"/>
        <end position="106"/>
    </location>
</feature>
<geneLocation type="mitochondrion"/>
<reference key="1">
    <citation type="journal article" date="2006" name="PLoS Biol.">
        <title>Complete mitochondrial genome and phylogeny of Pleistocene mammoth Mammuthus primigenius.</title>
        <authorList>
            <person name="Rogaev E.I."/>
            <person name="Moliaka Y.K."/>
            <person name="Malyarchuk B.A."/>
            <person name="Kondrashov F.A."/>
            <person name="Derenko M.V."/>
            <person name="Chumakov I."/>
            <person name="Grigorenko A.P."/>
        </authorList>
    </citation>
    <scope>NUCLEOTIDE SEQUENCE [GENOMIC DNA]</scope>
    <source>
        <tissue>Blood</tissue>
    </source>
</reference>
<name>NU3M_LOXAF</name>
<dbReference type="EC" id="7.1.1.2" evidence="1"/>
<dbReference type="EMBL" id="DQ316069">
    <property type="protein sequence ID" value="ABC17911.1"/>
    <property type="molecule type" value="Genomic_DNA"/>
</dbReference>
<dbReference type="SMR" id="Q2I3F4"/>
<dbReference type="FunCoup" id="Q2I3F4">
    <property type="interactions" value="56"/>
</dbReference>
<dbReference type="STRING" id="9785.ENSLAFP00000029498"/>
<dbReference type="eggNOG" id="KOG4662">
    <property type="taxonomic scope" value="Eukaryota"/>
</dbReference>
<dbReference type="InParanoid" id="Q2I3F4"/>
<dbReference type="Proteomes" id="UP000007646">
    <property type="component" value="Unassembled WGS sequence"/>
</dbReference>
<dbReference type="GO" id="GO:0005743">
    <property type="term" value="C:mitochondrial inner membrane"/>
    <property type="evidence" value="ECO:0000250"/>
    <property type="project" value="UniProtKB"/>
</dbReference>
<dbReference type="GO" id="GO:0030964">
    <property type="term" value="C:NADH dehydrogenase complex"/>
    <property type="evidence" value="ECO:0007669"/>
    <property type="project" value="TreeGrafter"/>
</dbReference>
<dbReference type="GO" id="GO:0008137">
    <property type="term" value="F:NADH dehydrogenase (ubiquinone) activity"/>
    <property type="evidence" value="ECO:0000250"/>
    <property type="project" value="UniProtKB"/>
</dbReference>
<dbReference type="GO" id="GO:0006120">
    <property type="term" value="P:mitochondrial electron transport, NADH to ubiquinone"/>
    <property type="evidence" value="ECO:0000250"/>
    <property type="project" value="UniProtKB"/>
</dbReference>
<dbReference type="FunFam" id="1.20.58.1610:FF:000004">
    <property type="entry name" value="NADH-quinone oxidoreductase subunit A"/>
    <property type="match status" value="1"/>
</dbReference>
<dbReference type="Gene3D" id="1.20.58.1610">
    <property type="entry name" value="NADH:ubiquinone/plastoquinone oxidoreductase, chain 3"/>
    <property type="match status" value="1"/>
</dbReference>
<dbReference type="InterPro" id="IPR000440">
    <property type="entry name" value="NADH_UbQ/plastoQ_OxRdtase_su3"/>
</dbReference>
<dbReference type="InterPro" id="IPR038430">
    <property type="entry name" value="NDAH_ubi_oxred_su3_sf"/>
</dbReference>
<dbReference type="PANTHER" id="PTHR11058">
    <property type="entry name" value="NADH-UBIQUINONE OXIDOREDUCTASE CHAIN 3"/>
    <property type="match status" value="1"/>
</dbReference>
<dbReference type="PANTHER" id="PTHR11058:SF9">
    <property type="entry name" value="NADH-UBIQUINONE OXIDOREDUCTASE CHAIN 3"/>
    <property type="match status" value="1"/>
</dbReference>
<dbReference type="Pfam" id="PF00507">
    <property type="entry name" value="Oxidored_q4"/>
    <property type="match status" value="1"/>
</dbReference>
<accession>Q2I3F4</accession>
<proteinExistence type="inferred from homology"/>
<evidence type="ECO:0000250" key="1">
    <source>
        <dbReference type="UniProtKB" id="P03897"/>
    </source>
</evidence>
<evidence type="ECO:0000250" key="2">
    <source>
        <dbReference type="UniProtKB" id="P03898"/>
    </source>
</evidence>
<evidence type="ECO:0000255" key="3"/>
<evidence type="ECO:0000305" key="4"/>
<organism>
    <name type="scientific">Loxodonta africana</name>
    <name type="common">African elephant</name>
    <dbReference type="NCBI Taxonomy" id="9785"/>
    <lineage>
        <taxon>Eukaryota</taxon>
        <taxon>Metazoa</taxon>
        <taxon>Chordata</taxon>
        <taxon>Craniata</taxon>
        <taxon>Vertebrata</taxon>
        <taxon>Euteleostomi</taxon>
        <taxon>Mammalia</taxon>
        <taxon>Eutheria</taxon>
        <taxon>Afrotheria</taxon>
        <taxon>Proboscidea</taxon>
        <taxon>Elephantidae</taxon>
        <taxon>Loxodonta</taxon>
    </lineage>
</organism>
<protein>
    <recommendedName>
        <fullName evidence="1">NADH-ubiquinone oxidoreductase chain 3</fullName>
        <ecNumber evidence="1">7.1.1.2</ecNumber>
    </recommendedName>
    <alternativeName>
        <fullName>NADH dehydrogenase subunit 3</fullName>
    </alternativeName>
</protein>